<accession>Q68S19</accession>
<reference key="1">
    <citation type="journal article" date="2004" name="DNA Res.">
        <title>Complete chloroplast genome sequence from Korea ginseng (Panax schinseng Nees) and comparative analysis of sequence evolution among 17 vascular plants.</title>
        <authorList>
            <person name="Kim K.-J."/>
            <person name="Lee H.-L."/>
        </authorList>
    </citation>
    <scope>NUCLEOTIDE SEQUENCE [LARGE SCALE GENOMIC DNA]</scope>
</reference>
<evidence type="ECO:0000255" key="1">
    <source>
        <dbReference type="HAMAP-Rule" id="MF_01396"/>
    </source>
</evidence>
<proteinExistence type="inferred from homology"/>
<gene>
    <name evidence="1" type="primary">atpH</name>
    <name type="ORF">PSC0145</name>
</gene>
<feature type="chain" id="PRO_0000362950" description="ATP synthase subunit c, chloroplastic">
    <location>
        <begin position="1"/>
        <end position="81"/>
    </location>
</feature>
<feature type="transmembrane region" description="Helical" evidence="1">
    <location>
        <begin position="3"/>
        <end position="23"/>
    </location>
</feature>
<feature type="transmembrane region" description="Helical" evidence="1">
    <location>
        <begin position="57"/>
        <end position="77"/>
    </location>
</feature>
<feature type="site" description="Reversibly protonated during proton transport" evidence="1">
    <location>
        <position position="61"/>
    </location>
</feature>
<comment type="function">
    <text evidence="1">F(1)F(0) ATP synthase produces ATP from ADP in the presence of a proton or sodium gradient. F-type ATPases consist of two structural domains, F(1) containing the extramembraneous catalytic core and F(0) containing the membrane proton channel, linked together by a central stalk and a peripheral stalk. During catalysis, ATP synthesis in the catalytic domain of F(1) is coupled via a rotary mechanism of the central stalk subunits to proton translocation.</text>
</comment>
<comment type="function">
    <text evidence="1">Key component of the F(0) channel; it plays a direct role in translocation across the membrane. A homomeric c-ring of between 10-14 subunits forms the central stalk rotor element with the F(1) delta and epsilon subunits.</text>
</comment>
<comment type="subunit">
    <text evidence="1">F-type ATPases have 2 components, F(1) - the catalytic core - and F(0) - the membrane proton channel. F(1) has five subunits: alpha(3), beta(3), gamma(1), delta(1), epsilon(1). F(0) has four main subunits: a(1), b(1), b'(1) and c(10-14). The alpha and beta chains form an alternating ring which encloses part of the gamma chain. F(1) is attached to F(0) by a central stalk formed by the gamma and epsilon chains, while a peripheral stalk is formed by the delta, b and b' chains.</text>
</comment>
<comment type="subcellular location">
    <subcellularLocation>
        <location evidence="1">Plastid</location>
        <location evidence="1">Chloroplast thylakoid membrane</location>
        <topology evidence="1">Multi-pass membrane protein</topology>
    </subcellularLocation>
</comment>
<comment type="miscellaneous">
    <text>In plastids the F-type ATPase is also known as CF(1)CF(0).</text>
</comment>
<comment type="similarity">
    <text evidence="1">Belongs to the ATPase C chain family.</text>
</comment>
<geneLocation type="chloroplast"/>
<name>ATPH_PANGI</name>
<organism>
    <name type="scientific">Panax ginseng</name>
    <name type="common">Korean ginseng</name>
    <dbReference type="NCBI Taxonomy" id="4054"/>
    <lineage>
        <taxon>Eukaryota</taxon>
        <taxon>Viridiplantae</taxon>
        <taxon>Streptophyta</taxon>
        <taxon>Embryophyta</taxon>
        <taxon>Tracheophyta</taxon>
        <taxon>Spermatophyta</taxon>
        <taxon>Magnoliopsida</taxon>
        <taxon>eudicotyledons</taxon>
        <taxon>Gunneridae</taxon>
        <taxon>Pentapetalae</taxon>
        <taxon>asterids</taxon>
        <taxon>campanulids</taxon>
        <taxon>Apiales</taxon>
        <taxon>Araliaceae</taxon>
        <taxon>Panax</taxon>
    </lineage>
</organism>
<sequence>MNPLISAASVIAAGLAVGLASIGPGVGQGTAAGQAVEGIARQPEAEGKIRGTLLLSLAFMEALTIYGLVVALALLFANPFV</sequence>
<dbReference type="EMBL" id="AY582139">
    <property type="protein sequence ID" value="AAT98496.1"/>
    <property type="molecule type" value="Genomic_DNA"/>
</dbReference>
<dbReference type="RefSeq" id="YP_086953.1">
    <property type="nucleotide sequence ID" value="NC_006290.1"/>
</dbReference>
<dbReference type="SMR" id="Q68S19"/>
<dbReference type="GeneID" id="3021480"/>
<dbReference type="GO" id="GO:0009535">
    <property type="term" value="C:chloroplast thylakoid membrane"/>
    <property type="evidence" value="ECO:0007669"/>
    <property type="project" value="UniProtKB-SubCell"/>
</dbReference>
<dbReference type="GO" id="GO:0045259">
    <property type="term" value="C:proton-transporting ATP synthase complex"/>
    <property type="evidence" value="ECO:0007669"/>
    <property type="project" value="UniProtKB-KW"/>
</dbReference>
<dbReference type="GO" id="GO:0033177">
    <property type="term" value="C:proton-transporting two-sector ATPase complex, proton-transporting domain"/>
    <property type="evidence" value="ECO:0007669"/>
    <property type="project" value="InterPro"/>
</dbReference>
<dbReference type="GO" id="GO:0008289">
    <property type="term" value="F:lipid binding"/>
    <property type="evidence" value="ECO:0007669"/>
    <property type="project" value="UniProtKB-KW"/>
</dbReference>
<dbReference type="GO" id="GO:0046933">
    <property type="term" value="F:proton-transporting ATP synthase activity, rotational mechanism"/>
    <property type="evidence" value="ECO:0007669"/>
    <property type="project" value="UniProtKB-UniRule"/>
</dbReference>
<dbReference type="CDD" id="cd18183">
    <property type="entry name" value="ATP-synt_Fo_c_ATPH"/>
    <property type="match status" value="1"/>
</dbReference>
<dbReference type="FunFam" id="1.20.20.10:FF:000001">
    <property type="entry name" value="ATP synthase subunit c, chloroplastic"/>
    <property type="match status" value="1"/>
</dbReference>
<dbReference type="Gene3D" id="1.20.20.10">
    <property type="entry name" value="F1F0 ATP synthase subunit C"/>
    <property type="match status" value="1"/>
</dbReference>
<dbReference type="HAMAP" id="MF_01396">
    <property type="entry name" value="ATP_synth_c_bact"/>
    <property type="match status" value="1"/>
</dbReference>
<dbReference type="InterPro" id="IPR005953">
    <property type="entry name" value="ATP_synth_csu_bac/chlpt"/>
</dbReference>
<dbReference type="InterPro" id="IPR000454">
    <property type="entry name" value="ATP_synth_F0_csu"/>
</dbReference>
<dbReference type="InterPro" id="IPR020537">
    <property type="entry name" value="ATP_synth_F0_csu_DDCD_BS"/>
</dbReference>
<dbReference type="InterPro" id="IPR038662">
    <property type="entry name" value="ATP_synth_F0_csu_sf"/>
</dbReference>
<dbReference type="InterPro" id="IPR002379">
    <property type="entry name" value="ATPase_proteolipid_c-like_dom"/>
</dbReference>
<dbReference type="InterPro" id="IPR035921">
    <property type="entry name" value="F/V-ATP_Csub_sf"/>
</dbReference>
<dbReference type="NCBIfam" id="TIGR01260">
    <property type="entry name" value="ATP_synt_c"/>
    <property type="match status" value="1"/>
</dbReference>
<dbReference type="NCBIfam" id="NF005608">
    <property type="entry name" value="PRK07354.1"/>
    <property type="match status" value="1"/>
</dbReference>
<dbReference type="PANTHER" id="PTHR10031">
    <property type="entry name" value="ATP SYNTHASE LIPID-BINDING PROTEIN, MITOCHONDRIAL"/>
    <property type="match status" value="1"/>
</dbReference>
<dbReference type="PANTHER" id="PTHR10031:SF0">
    <property type="entry name" value="ATPASE PROTEIN 9"/>
    <property type="match status" value="1"/>
</dbReference>
<dbReference type="Pfam" id="PF00137">
    <property type="entry name" value="ATP-synt_C"/>
    <property type="match status" value="1"/>
</dbReference>
<dbReference type="PRINTS" id="PR00124">
    <property type="entry name" value="ATPASEC"/>
</dbReference>
<dbReference type="SUPFAM" id="SSF81333">
    <property type="entry name" value="F1F0 ATP synthase subunit C"/>
    <property type="match status" value="1"/>
</dbReference>
<dbReference type="PROSITE" id="PS00605">
    <property type="entry name" value="ATPASE_C"/>
    <property type="match status" value="1"/>
</dbReference>
<keyword id="KW-0066">ATP synthesis</keyword>
<keyword id="KW-0138">CF(0)</keyword>
<keyword id="KW-0150">Chloroplast</keyword>
<keyword id="KW-0375">Hydrogen ion transport</keyword>
<keyword id="KW-0406">Ion transport</keyword>
<keyword id="KW-0446">Lipid-binding</keyword>
<keyword id="KW-0472">Membrane</keyword>
<keyword id="KW-0934">Plastid</keyword>
<keyword id="KW-0793">Thylakoid</keyword>
<keyword id="KW-0812">Transmembrane</keyword>
<keyword id="KW-1133">Transmembrane helix</keyword>
<keyword id="KW-0813">Transport</keyword>
<protein>
    <recommendedName>
        <fullName evidence="1">ATP synthase subunit c, chloroplastic</fullName>
    </recommendedName>
    <alternativeName>
        <fullName evidence="1">ATP synthase F(0) sector subunit c</fullName>
    </alternativeName>
    <alternativeName>
        <fullName evidence="1">ATPase subunit III</fullName>
    </alternativeName>
    <alternativeName>
        <fullName evidence="1">F-type ATPase subunit c</fullName>
        <shortName evidence="1">F-ATPase subunit c</shortName>
    </alternativeName>
    <alternativeName>
        <fullName evidence="1">Lipid-binding protein</fullName>
    </alternativeName>
</protein>